<organism>
    <name type="scientific">Mus musculus</name>
    <name type="common">Mouse</name>
    <dbReference type="NCBI Taxonomy" id="10090"/>
    <lineage>
        <taxon>Eukaryota</taxon>
        <taxon>Metazoa</taxon>
        <taxon>Chordata</taxon>
        <taxon>Craniata</taxon>
        <taxon>Vertebrata</taxon>
        <taxon>Euteleostomi</taxon>
        <taxon>Mammalia</taxon>
        <taxon>Eutheria</taxon>
        <taxon>Euarchontoglires</taxon>
        <taxon>Glires</taxon>
        <taxon>Rodentia</taxon>
        <taxon>Myomorpha</taxon>
        <taxon>Muroidea</taxon>
        <taxon>Muridae</taxon>
        <taxon>Murinae</taxon>
        <taxon>Mus</taxon>
        <taxon>Mus</taxon>
    </lineage>
</organism>
<feature type="chain" id="PRO_0000248485" description="Taste receptor type 2 member 129">
    <location>
        <begin position="1"/>
        <end position="320"/>
    </location>
</feature>
<feature type="topological domain" description="Extracellular" evidence="1">
    <location>
        <begin position="1"/>
        <end position="8"/>
    </location>
</feature>
<feature type="transmembrane region" description="Helical; Name=1" evidence="1">
    <location>
        <begin position="9"/>
        <end position="29"/>
    </location>
</feature>
<feature type="topological domain" description="Cytoplasmic" evidence="1">
    <location>
        <begin position="30"/>
        <end position="55"/>
    </location>
</feature>
<feature type="transmembrane region" description="Helical; Name=2" evidence="1">
    <location>
        <begin position="56"/>
        <end position="76"/>
    </location>
</feature>
<feature type="topological domain" description="Extracellular" evidence="1">
    <location>
        <begin position="77"/>
        <end position="88"/>
    </location>
</feature>
<feature type="transmembrane region" description="Helical; Name=3" evidence="1">
    <location>
        <begin position="89"/>
        <end position="109"/>
    </location>
</feature>
<feature type="topological domain" description="Cytoplasmic" evidence="1">
    <location>
        <begin position="110"/>
        <end position="128"/>
    </location>
</feature>
<feature type="transmembrane region" description="Helical; Name=4" evidence="1">
    <location>
        <begin position="129"/>
        <end position="149"/>
    </location>
</feature>
<feature type="topological domain" description="Extracellular" evidence="1">
    <location>
        <begin position="150"/>
        <end position="185"/>
    </location>
</feature>
<feature type="transmembrane region" description="Helical; Name=5" evidence="1">
    <location>
        <begin position="186"/>
        <end position="206"/>
    </location>
</feature>
<feature type="topological domain" description="Cytoplasmic" evidence="1">
    <location>
        <begin position="207"/>
        <end position="233"/>
    </location>
</feature>
<feature type="transmembrane region" description="Helical; Name=6" evidence="1">
    <location>
        <begin position="234"/>
        <end position="254"/>
    </location>
</feature>
<feature type="topological domain" description="Extracellular" evidence="1">
    <location>
        <begin position="255"/>
        <end position="264"/>
    </location>
</feature>
<feature type="transmembrane region" description="Helical; Name=7" evidence="1">
    <location>
        <begin position="265"/>
        <end position="285"/>
    </location>
</feature>
<feature type="topological domain" description="Cytoplasmic" evidence="1">
    <location>
        <begin position="286"/>
        <end position="320"/>
    </location>
</feature>
<feature type="glycosylation site" description="N-linked (GlcNAc...) asparagine" evidence="1">
    <location>
        <position position="170"/>
    </location>
</feature>
<keyword id="KW-0297">G-protein coupled receptor</keyword>
<keyword id="KW-0325">Glycoprotein</keyword>
<keyword id="KW-0472">Membrane</keyword>
<keyword id="KW-0675">Receptor</keyword>
<keyword id="KW-1185">Reference proteome</keyword>
<keyword id="KW-0716">Sensory transduction</keyword>
<keyword id="KW-0919">Taste</keyword>
<keyword id="KW-0807">Transducer</keyword>
<keyword id="KW-0812">Transmembrane</keyword>
<keyword id="KW-1133">Transmembrane helix</keyword>
<gene>
    <name evidence="5" type="primary">Tas2r129</name>
    <name evidence="2" type="synonym">T2r60</name>
</gene>
<protein>
    <recommendedName>
        <fullName>Taste receptor type 2 member 129</fullName>
        <shortName>T2R129</shortName>
        <shortName>mT2R60</shortName>
    </recommendedName>
</protein>
<reference key="1">
    <citation type="journal article" date="2009" name="PLoS Biol.">
        <title>Lineage-specific biology revealed by a finished genome assembly of the mouse.</title>
        <authorList>
            <person name="Church D.M."/>
            <person name="Goodstadt L."/>
            <person name="Hillier L.W."/>
            <person name="Zody M.C."/>
            <person name="Goldstein S."/>
            <person name="She X."/>
            <person name="Bult C.J."/>
            <person name="Agarwala R."/>
            <person name="Cherry J.L."/>
            <person name="DiCuccio M."/>
            <person name="Hlavina W."/>
            <person name="Kapustin Y."/>
            <person name="Meric P."/>
            <person name="Maglott D."/>
            <person name="Birtle Z."/>
            <person name="Marques A.C."/>
            <person name="Graves T."/>
            <person name="Zhou S."/>
            <person name="Teague B."/>
            <person name="Potamousis K."/>
            <person name="Churas C."/>
            <person name="Place M."/>
            <person name="Herschleb J."/>
            <person name="Runnheim R."/>
            <person name="Forrest D."/>
            <person name="Amos-Landgraf J."/>
            <person name="Schwartz D.C."/>
            <person name="Cheng Z."/>
            <person name="Lindblad-Toh K."/>
            <person name="Eichler E.E."/>
            <person name="Ponting C.P."/>
        </authorList>
    </citation>
    <scope>NUCLEOTIDE SEQUENCE [LARGE SCALE GENOMIC DNA]</scope>
    <source>
        <strain>C57BL/6J</strain>
    </source>
</reference>
<reference evidence="3 4" key="2">
    <citation type="journal article" date="2003" name="Mol. Biol. Evol.">
        <title>Adaptive diversification of bitter taste receptor genes in mammalian evolution.</title>
        <authorList>
            <person name="Shi P."/>
            <person name="Zhang J."/>
            <person name="Yang H."/>
            <person name="Zhang Y.-P."/>
        </authorList>
    </citation>
    <scope>IDENTIFICATION</scope>
</reference>
<sequence>MDGIVQNMFTFIVIVEIIIGWIGNGFIALVNCIHWYKRRKISALNQILTALAFSRIYLLLTVFTVIAVSTLYTHVLVTRRVVKLINFHLLFSNHFSMWLAACLGLYYFLKIAHFPNSIFVYLKMRINQVVSGTLLMSLGLLFLNTLLINSYIDTKIDDYREHLLYDFTSNNTASFYRVILVINNCIFTSIPFTLSQSTFLLLIFSLWRHYKKMQQHAQRCRDVLADAHIRVLQTMVTYVLLCAIFFLSLSMQILRSELLKNILYVRFCEIVAAVFPSGHSCVLICRDTNLRGTFLSVLSWLKQRFTSWIPNINCRSSCIF</sequence>
<comment type="function">
    <text evidence="3">Putative taste receptor which may play a role in the perception of bitterness.</text>
</comment>
<comment type="subcellular location">
    <subcellularLocation>
        <location evidence="3">Membrane</location>
        <topology evidence="3">Multi-pass membrane protein</topology>
    </subcellularLocation>
</comment>
<comment type="miscellaneous">
    <text evidence="3">Several bitter taste receptors are expressed in a single taste receptor cell.</text>
</comment>
<comment type="similarity">
    <text evidence="1">Belongs to the G-protein coupled receptor T2R family.</text>
</comment>
<proteinExistence type="inferred from homology"/>
<name>TR129_MOUSE</name>
<dbReference type="EMBL" id="AC129318">
    <property type="status" value="NOT_ANNOTATED_CDS"/>
    <property type="molecule type" value="Genomic_DNA"/>
</dbReference>
<dbReference type="EMBL" id="BK001088">
    <property type="protein sequence ID" value="DAA01227.1"/>
    <property type="molecule type" value="Genomic_DNA"/>
</dbReference>
<dbReference type="CCDS" id="CCDS20629.1"/>
<dbReference type="RefSeq" id="NP_996912.1">
    <property type="nucleotide sequence ID" value="NM_207029.1"/>
</dbReference>
<dbReference type="SMR" id="Q7M709"/>
<dbReference type="FunCoup" id="Q7M709">
    <property type="interactions" value="88"/>
</dbReference>
<dbReference type="STRING" id="10090.ENSMUSP00000067640"/>
<dbReference type="GlyCosmos" id="Q7M709">
    <property type="glycosylation" value="1 site, No reported glycans"/>
</dbReference>
<dbReference type="GlyGen" id="Q7M709">
    <property type="glycosylation" value="1 site"/>
</dbReference>
<dbReference type="PaxDb" id="10090-ENSMUSP00000067640"/>
<dbReference type="DNASU" id="387354"/>
<dbReference type="Ensembl" id="ENSMUST00000070991.5">
    <property type="protein sequence ID" value="ENSMUSP00000067640.4"/>
    <property type="gene ID" value="ENSMUSG00000063762.6"/>
</dbReference>
<dbReference type="GeneID" id="387354"/>
<dbReference type="KEGG" id="mmu:387354"/>
<dbReference type="UCSC" id="uc009ejv.1">
    <property type="organism name" value="mouse"/>
</dbReference>
<dbReference type="AGR" id="MGI:2681276"/>
<dbReference type="CTD" id="387354"/>
<dbReference type="MGI" id="MGI:2681276">
    <property type="gene designation" value="Tas2r129"/>
</dbReference>
<dbReference type="VEuPathDB" id="HostDB:ENSMUSG00000063762"/>
<dbReference type="eggNOG" id="ENOG502SKRK">
    <property type="taxonomic scope" value="Eukaryota"/>
</dbReference>
<dbReference type="GeneTree" id="ENSGT01100000263477"/>
<dbReference type="HOGENOM" id="CLU_072337_3_0_1"/>
<dbReference type="InParanoid" id="Q7M709"/>
<dbReference type="OMA" id="MWLAACL"/>
<dbReference type="OrthoDB" id="8876749at2759"/>
<dbReference type="PhylomeDB" id="Q7M709"/>
<dbReference type="TreeFam" id="TF335891"/>
<dbReference type="BioGRID-ORCS" id="387354">
    <property type="hits" value="2 hits in 76 CRISPR screens"/>
</dbReference>
<dbReference type="ChiTaRS" id="Tas2r129">
    <property type="organism name" value="mouse"/>
</dbReference>
<dbReference type="PRO" id="PR:Q7M709"/>
<dbReference type="Proteomes" id="UP000000589">
    <property type="component" value="Chromosome 6"/>
</dbReference>
<dbReference type="RNAct" id="Q7M709">
    <property type="molecule type" value="protein"/>
</dbReference>
<dbReference type="GO" id="GO:0016020">
    <property type="term" value="C:membrane"/>
    <property type="evidence" value="ECO:0007669"/>
    <property type="project" value="UniProtKB-SubCell"/>
</dbReference>
<dbReference type="GO" id="GO:0033038">
    <property type="term" value="F:bitter taste receptor activity"/>
    <property type="evidence" value="ECO:0007669"/>
    <property type="project" value="InterPro"/>
</dbReference>
<dbReference type="GO" id="GO:0004930">
    <property type="term" value="F:G protein-coupled receptor activity"/>
    <property type="evidence" value="ECO:0007669"/>
    <property type="project" value="UniProtKB-KW"/>
</dbReference>
<dbReference type="CDD" id="cd15019">
    <property type="entry name" value="7tm_TAS2R14-like"/>
    <property type="match status" value="1"/>
</dbReference>
<dbReference type="FunFam" id="1.20.1070.10:FF:000055">
    <property type="entry name" value="Taste receptor type 2"/>
    <property type="match status" value="1"/>
</dbReference>
<dbReference type="Gene3D" id="1.20.1070.10">
    <property type="entry name" value="Rhodopsin 7-helix transmembrane proteins"/>
    <property type="match status" value="1"/>
</dbReference>
<dbReference type="InterPro" id="IPR007960">
    <property type="entry name" value="TAS2R"/>
</dbReference>
<dbReference type="PANTHER" id="PTHR11394">
    <property type="entry name" value="TASTE RECEPTOR TYPE 2"/>
    <property type="match status" value="1"/>
</dbReference>
<dbReference type="PANTHER" id="PTHR11394:SF34">
    <property type="entry name" value="TASTE RECEPTOR TYPE 2 MEMBER 129"/>
    <property type="match status" value="1"/>
</dbReference>
<dbReference type="Pfam" id="PF05296">
    <property type="entry name" value="TAS2R"/>
    <property type="match status" value="1"/>
</dbReference>
<dbReference type="SUPFAM" id="SSF81321">
    <property type="entry name" value="Family A G protein-coupled receptor-like"/>
    <property type="match status" value="1"/>
</dbReference>
<accession>Q7M709</accession>
<evidence type="ECO:0000255" key="1"/>
<evidence type="ECO:0000303" key="2">
    <source>
    </source>
</evidence>
<evidence type="ECO:0000305" key="3"/>
<evidence type="ECO:0000312" key="4">
    <source>
        <dbReference type="EMBL" id="DAA01227.1"/>
    </source>
</evidence>
<evidence type="ECO:0000312" key="5">
    <source>
        <dbReference type="MGI" id="MGI:2681276"/>
    </source>
</evidence>